<name>RAD18_DEBHA</name>
<comment type="function">
    <text evidence="1">E3 RING-finger protein, member of the UBC2/RAD6 epistasis group. Associates to the E2 ubiquitin conjugating enzyme UBC2/RAD6 to form the UBC2-RAD18 ubiquitin ligase complex involved in postreplicative repair (PRR) of damaged DNA.</text>
</comment>
<comment type="catalytic activity">
    <reaction>
        <text>S-ubiquitinyl-[E2 ubiquitin-conjugating enzyme]-L-cysteine + [acceptor protein]-L-lysine = [E2 ubiquitin-conjugating enzyme]-L-cysteine + N(6)-ubiquitinyl-[acceptor protein]-L-lysine.</text>
        <dbReference type="EC" id="2.3.2.27"/>
    </reaction>
</comment>
<comment type="pathway">
    <text>Protein modification; protein ubiquitination.</text>
</comment>
<comment type="subunit">
    <text evidence="1">Interacts with E2 UBC2, forming a complex with ubiquitin ligase activity.</text>
</comment>
<comment type="subcellular location">
    <subcellularLocation>
        <location evidence="1">Nucleus</location>
    </subcellularLocation>
</comment>
<comment type="similarity">
    <text evidence="6">Belongs to the RAD18 family.</text>
</comment>
<protein>
    <recommendedName>
        <fullName>Postreplication repair E3 ubiquitin-protein ligase RAD18</fullName>
        <ecNumber>2.3.2.27</ecNumber>
    </recommendedName>
    <alternativeName>
        <fullName evidence="6">RING-type E3 ubiquitin transferase RAD18</fullName>
    </alternativeName>
</protein>
<proteinExistence type="inferred from homology"/>
<feature type="chain" id="PRO_0000056155" description="Postreplication repair E3 ubiquitin-protein ligase RAD18">
    <location>
        <begin position="1"/>
        <end position="491"/>
    </location>
</feature>
<feature type="domain" description="SAP" evidence="3">
    <location>
        <begin position="293"/>
        <end position="327"/>
    </location>
</feature>
<feature type="zinc finger region" description="RING-type" evidence="2">
    <location>
        <begin position="36"/>
        <end position="74"/>
    </location>
</feature>
<feature type="zinc finger region" description="UBZ4-type" evidence="4">
    <location>
        <begin position="185"/>
        <end position="213"/>
    </location>
</feature>
<feature type="region of interest" description="Disordered" evidence="5">
    <location>
        <begin position="116"/>
        <end position="161"/>
    </location>
</feature>
<feature type="region of interest" description="Disordered" evidence="5">
    <location>
        <begin position="211"/>
        <end position="249"/>
    </location>
</feature>
<feature type="compositionally biased region" description="Basic and acidic residues" evidence="5">
    <location>
        <begin position="126"/>
        <end position="138"/>
    </location>
</feature>
<feature type="compositionally biased region" description="Low complexity" evidence="5">
    <location>
        <begin position="143"/>
        <end position="161"/>
    </location>
</feature>
<feature type="compositionally biased region" description="Low complexity" evidence="5">
    <location>
        <begin position="213"/>
        <end position="229"/>
    </location>
</feature>
<feature type="binding site" evidence="4">
    <location>
        <position position="188"/>
    </location>
    <ligand>
        <name>Zn(2+)</name>
        <dbReference type="ChEBI" id="CHEBI:29105"/>
    </ligand>
</feature>
<feature type="binding site" evidence="4">
    <location>
        <position position="191"/>
    </location>
    <ligand>
        <name>Zn(2+)</name>
        <dbReference type="ChEBI" id="CHEBI:29105"/>
    </ligand>
</feature>
<feature type="binding site" evidence="4">
    <location>
        <position position="204"/>
    </location>
    <ligand>
        <name>Zn(2+)</name>
        <dbReference type="ChEBI" id="CHEBI:29105"/>
    </ligand>
</feature>
<feature type="binding site" evidence="4">
    <location>
        <position position="208"/>
    </location>
    <ligand>
        <name>Zn(2+)</name>
        <dbReference type="ChEBI" id="CHEBI:29105"/>
    </ligand>
</feature>
<keyword id="KW-0227">DNA damage</keyword>
<keyword id="KW-0234">DNA repair</keyword>
<keyword id="KW-0238">DNA-binding</keyword>
<keyword id="KW-0479">Metal-binding</keyword>
<keyword id="KW-0539">Nucleus</keyword>
<keyword id="KW-1185">Reference proteome</keyword>
<keyword id="KW-0808">Transferase</keyword>
<keyword id="KW-0833">Ubl conjugation pathway</keyword>
<keyword id="KW-0862">Zinc</keyword>
<keyword id="KW-0863">Zinc-finger</keyword>
<accession>Q6BLM3</accession>
<evidence type="ECO:0000250" key="1"/>
<evidence type="ECO:0000255" key="2">
    <source>
        <dbReference type="PROSITE-ProRule" id="PRU00175"/>
    </source>
</evidence>
<evidence type="ECO:0000255" key="3">
    <source>
        <dbReference type="PROSITE-ProRule" id="PRU00186"/>
    </source>
</evidence>
<evidence type="ECO:0000255" key="4">
    <source>
        <dbReference type="PROSITE-ProRule" id="PRU01256"/>
    </source>
</evidence>
<evidence type="ECO:0000256" key="5">
    <source>
        <dbReference type="SAM" id="MobiDB-lite"/>
    </source>
</evidence>
<evidence type="ECO:0000305" key="6"/>
<dbReference type="EC" id="2.3.2.27"/>
<dbReference type="EMBL" id="CR382138">
    <property type="protein sequence ID" value="CAG89248.2"/>
    <property type="molecule type" value="Genomic_DNA"/>
</dbReference>
<dbReference type="RefSeq" id="XP_460898.2">
    <property type="nucleotide sequence ID" value="XM_460898.1"/>
</dbReference>
<dbReference type="SMR" id="Q6BLM3"/>
<dbReference type="FunCoup" id="Q6BLM3">
    <property type="interactions" value="314"/>
</dbReference>
<dbReference type="STRING" id="284592.Q6BLM3"/>
<dbReference type="GeneID" id="2904190"/>
<dbReference type="KEGG" id="dha:DEHA2F12298g"/>
<dbReference type="VEuPathDB" id="FungiDB:DEHA2F12298g"/>
<dbReference type="eggNOG" id="KOG0287">
    <property type="taxonomic scope" value="Eukaryota"/>
</dbReference>
<dbReference type="HOGENOM" id="CLU_028491_2_0_1"/>
<dbReference type="InParanoid" id="Q6BLM3"/>
<dbReference type="OMA" id="AKSEYEP"/>
<dbReference type="OrthoDB" id="9049620at2759"/>
<dbReference type="UniPathway" id="UPA00143"/>
<dbReference type="Proteomes" id="UP000000599">
    <property type="component" value="Chromosome F"/>
</dbReference>
<dbReference type="GO" id="GO:0005634">
    <property type="term" value="C:nucleus"/>
    <property type="evidence" value="ECO:0007669"/>
    <property type="project" value="UniProtKB-SubCell"/>
</dbReference>
<dbReference type="GO" id="GO:0097505">
    <property type="term" value="C:Rad6-Rad18 complex"/>
    <property type="evidence" value="ECO:0007669"/>
    <property type="project" value="TreeGrafter"/>
</dbReference>
<dbReference type="GO" id="GO:0003697">
    <property type="term" value="F:single-stranded DNA binding"/>
    <property type="evidence" value="ECO:0007669"/>
    <property type="project" value="InterPro"/>
</dbReference>
<dbReference type="GO" id="GO:0061630">
    <property type="term" value="F:ubiquitin protein ligase activity"/>
    <property type="evidence" value="ECO:0007669"/>
    <property type="project" value="InterPro"/>
</dbReference>
<dbReference type="GO" id="GO:0008270">
    <property type="term" value="F:zinc ion binding"/>
    <property type="evidence" value="ECO:0007669"/>
    <property type="project" value="UniProtKB-KW"/>
</dbReference>
<dbReference type="GO" id="GO:0006301">
    <property type="term" value="P:postreplication repair"/>
    <property type="evidence" value="ECO:0007669"/>
    <property type="project" value="InterPro"/>
</dbReference>
<dbReference type="GO" id="GO:0006513">
    <property type="term" value="P:protein monoubiquitination"/>
    <property type="evidence" value="ECO:0007669"/>
    <property type="project" value="InterPro"/>
</dbReference>
<dbReference type="FunFam" id="3.30.40.10:FF:000172">
    <property type="entry name" value="E3 ubiquitin-protein ligase RAD18"/>
    <property type="match status" value="1"/>
</dbReference>
<dbReference type="Gene3D" id="3.30.40.10">
    <property type="entry name" value="Zinc/RING finger domain, C3HC4 (zinc finger)"/>
    <property type="match status" value="1"/>
</dbReference>
<dbReference type="InterPro" id="IPR039577">
    <property type="entry name" value="Rad18"/>
</dbReference>
<dbReference type="InterPro" id="IPR004580">
    <property type="entry name" value="Rad18_fungi"/>
</dbReference>
<dbReference type="InterPro" id="IPR006642">
    <property type="entry name" value="Rad18_UBZ4"/>
</dbReference>
<dbReference type="InterPro" id="IPR003034">
    <property type="entry name" value="SAP_dom"/>
</dbReference>
<dbReference type="InterPro" id="IPR001841">
    <property type="entry name" value="Znf_RING"/>
</dbReference>
<dbReference type="InterPro" id="IPR013083">
    <property type="entry name" value="Znf_RING/FYVE/PHD"/>
</dbReference>
<dbReference type="InterPro" id="IPR017907">
    <property type="entry name" value="Znf_RING_CS"/>
</dbReference>
<dbReference type="NCBIfam" id="TIGR00599">
    <property type="entry name" value="rad18"/>
    <property type="match status" value="1"/>
</dbReference>
<dbReference type="PANTHER" id="PTHR14134">
    <property type="entry name" value="E3 UBIQUITIN-PROTEIN LIGASE RAD18"/>
    <property type="match status" value="1"/>
</dbReference>
<dbReference type="PANTHER" id="PTHR14134:SF2">
    <property type="entry name" value="E3 UBIQUITIN-PROTEIN LIGASE RAD18"/>
    <property type="match status" value="1"/>
</dbReference>
<dbReference type="Pfam" id="PF02037">
    <property type="entry name" value="SAP"/>
    <property type="match status" value="1"/>
</dbReference>
<dbReference type="Pfam" id="PF13923">
    <property type="entry name" value="zf-C3HC4_2"/>
    <property type="match status" value="1"/>
</dbReference>
<dbReference type="SMART" id="SM00184">
    <property type="entry name" value="RING"/>
    <property type="match status" value="1"/>
</dbReference>
<dbReference type="SMART" id="SM00513">
    <property type="entry name" value="SAP"/>
    <property type="match status" value="1"/>
</dbReference>
<dbReference type="SMART" id="SM00734">
    <property type="entry name" value="ZnF_Rad18"/>
    <property type="match status" value="1"/>
</dbReference>
<dbReference type="SUPFAM" id="SSF57850">
    <property type="entry name" value="RING/U-box"/>
    <property type="match status" value="1"/>
</dbReference>
<dbReference type="PROSITE" id="PS50800">
    <property type="entry name" value="SAP"/>
    <property type="match status" value="1"/>
</dbReference>
<dbReference type="PROSITE" id="PS00518">
    <property type="entry name" value="ZF_RING_1"/>
    <property type="match status" value="1"/>
</dbReference>
<dbReference type="PROSITE" id="PS50089">
    <property type="entry name" value="ZF_RING_2"/>
    <property type="match status" value="1"/>
</dbReference>
<dbReference type="PROSITE" id="PS51908">
    <property type="entry name" value="ZF_UBZ4"/>
    <property type="match status" value="1"/>
</dbReference>
<organism>
    <name type="scientific">Debaryomyces hansenii (strain ATCC 36239 / CBS 767 / BCRC 21394 / JCM 1990 / NBRC 0083 / IGC 2968)</name>
    <name type="common">Yeast</name>
    <name type="synonym">Torulaspora hansenii</name>
    <dbReference type="NCBI Taxonomy" id="284592"/>
    <lineage>
        <taxon>Eukaryota</taxon>
        <taxon>Fungi</taxon>
        <taxon>Dikarya</taxon>
        <taxon>Ascomycota</taxon>
        <taxon>Saccharomycotina</taxon>
        <taxon>Pichiomycetes</taxon>
        <taxon>Debaryomycetaceae</taxon>
        <taxon>Debaryomyces</taxon>
    </lineage>
</organism>
<gene>
    <name type="primary">RAD18</name>
    <name type="ordered locus">DEHA2F12298g</name>
</gene>
<reference key="1">
    <citation type="journal article" date="2004" name="Nature">
        <title>Genome evolution in yeasts.</title>
        <authorList>
            <person name="Dujon B."/>
            <person name="Sherman D."/>
            <person name="Fischer G."/>
            <person name="Durrens P."/>
            <person name="Casaregola S."/>
            <person name="Lafontaine I."/>
            <person name="de Montigny J."/>
            <person name="Marck C."/>
            <person name="Neuveglise C."/>
            <person name="Talla E."/>
            <person name="Goffard N."/>
            <person name="Frangeul L."/>
            <person name="Aigle M."/>
            <person name="Anthouard V."/>
            <person name="Babour A."/>
            <person name="Barbe V."/>
            <person name="Barnay S."/>
            <person name="Blanchin S."/>
            <person name="Beckerich J.-M."/>
            <person name="Beyne E."/>
            <person name="Bleykasten C."/>
            <person name="Boisrame A."/>
            <person name="Boyer J."/>
            <person name="Cattolico L."/>
            <person name="Confanioleri F."/>
            <person name="de Daruvar A."/>
            <person name="Despons L."/>
            <person name="Fabre E."/>
            <person name="Fairhead C."/>
            <person name="Ferry-Dumazet H."/>
            <person name="Groppi A."/>
            <person name="Hantraye F."/>
            <person name="Hennequin C."/>
            <person name="Jauniaux N."/>
            <person name="Joyet P."/>
            <person name="Kachouri R."/>
            <person name="Kerrest A."/>
            <person name="Koszul R."/>
            <person name="Lemaire M."/>
            <person name="Lesur I."/>
            <person name="Ma L."/>
            <person name="Muller H."/>
            <person name="Nicaud J.-M."/>
            <person name="Nikolski M."/>
            <person name="Oztas S."/>
            <person name="Ozier-Kalogeropoulos O."/>
            <person name="Pellenz S."/>
            <person name="Potier S."/>
            <person name="Richard G.-F."/>
            <person name="Straub M.-L."/>
            <person name="Suleau A."/>
            <person name="Swennen D."/>
            <person name="Tekaia F."/>
            <person name="Wesolowski-Louvel M."/>
            <person name="Westhof E."/>
            <person name="Wirth B."/>
            <person name="Zeniou-Meyer M."/>
            <person name="Zivanovic Y."/>
            <person name="Bolotin-Fukuhara M."/>
            <person name="Thierry A."/>
            <person name="Bouchier C."/>
            <person name="Caudron B."/>
            <person name="Scarpelli C."/>
            <person name="Gaillardin C."/>
            <person name="Weissenbach J."/>
            <person name="Wincker P."/>
            <person name="Souciet J.-L."/>
        </authorList>
    </citation>
    <scope>NUCLEOTIDE SEQUENCE [LARGE SCALE GENOMIC DNA]</scope>
    <source>
        <strain>ATCC 36239 / CBS 767 / BCRC 21394 / JCM 1990 / NBRC 0083 / IGC 2968</strain>
    </source>
</reference>
<sequence>MNSNPFTKNLQNVTDPSDWEPTKLPNLKELDSLQRCYICKEFLKAPVITSCNHTFCSHCIREYLIVNSHCPLCKAEQFESNLKRVILLEEIVLCFSKFRPILLELLKKEESNEAYDKNRSPFSEIPSKDEDSRKRSSPDQEVIEISSDESNSLELSEASNDVPKKKIKAEINSNSRNAIPTRNEMVECPICAEVMSADLLQTQHIDYCLSGKSQPSSSRSAGNSSSRYQSMKRRQPNKTNNGISSFFKPADNKPIMAGAGKLDLSKTDNQNFYFDEVSKHHHNDIKKLPKLDFSSLTTPKLKEKLSHLKLPVQGTRIQLELRYNQYYILFNSNLDSNHPLSEKVLKQKLNQWELSHSAFTNQGSTSTLFNNGSPAVKSITDKNFSVKEWLDANRNEYKSLVKAARASIKKASTKNVTSSISIDTEAINTHSVGGQHLNERSEYRSEANLIEPIDDGASEEIQQNEISNLNFKKDIANSPLFVKDTLNESHS</sequence>